<organism>
    <name type="scientific">Shewanella halifaxensis (strain HAW-EB4)</name>
    <dbReference type="NCBI Taxonomy" id="458817"/>
    <lineage>
        <taxon>Bacteria</taxon>
        <taxon>Pseudomonadati</taxon>
        <taxon>Pseudomonadota</taxon>
        <taxon>Gammaproteobacteria</taxon>
        <taxon>Alteromonadales</taxon>
        <taxon>Shewanellaceae</taxon>
        <taxon>Shewanella</taxon>
    </lineage>
</organism>
<reference key="1">
    <citation type="submission" date="2008-01" db="EMBL/GenBank/DDBJ databases">
        <title>Complete sequence of Shewanella halifaxensis HAW-EB4.</title>
        <authorList>
            <consortium name="US DOE Joint Genome Institute"/>
            <person name="Copeland A."/>
            <person name="Lucas S."/>
            <person name="Lapidus A."/>
            <person name="Glavina del Rio T."/>
            <person name="Dalin E."/>
            <person name="Tice H."/>
            <person name="Bruce D."/>
            <person name="Goodwin L."/>
            <person name="Pitluck S."/>
            <person name="Sims D."/>
            <person name="Brettin T."/>
            <person name="Detter J.C."/>
            <person name="Han C."/>
            <person name="Kuske C.R."/>
            <person name="Schmutz J."/>
            <person name="Larimer F."/>
            <person name="Land M."/>
            <person name="Hauser L."/>
            <person name="Kyrpides N."/>
            <person name="Kim E."/>
            <person name="Zhao J.-S."/>
            <person name="Richardson P."/>
        </authorList>
    </citation>
    <scope>NUCLEOTIDE SEQUENCE [LARGE SCALE GENOMIC DNA]</scope>
    <source>
        <strain>HAW-EB4</strain>
    </source>
</reference>
<gene>
    <name evidence="1" type="primary">glyS</name>
    <name type="ordered locus">Shal_0006</name>
</gene>
<sequence>MNFENLLIEVGTEELPPKSLRKLAESFLANFTEELTKAELSFDSAVWHASPRRLAICINQLALAQADKVVEKRGPAIAQAFDADGNPTKAAQGWARGNGISVEQAERLKTDKGEWLLHQARVVGVETKSLIADMAQRSLDKLPIPKPMRWGSNTTQFIRPVHTVTMLLGSEVVEGELLGIKSDRVIRGHRFMGESSFELDHADNYLVALKEKGKVLADYQARKAIIKTDAEAAAAKIGGVADLEDDLLEEVTSLVEWPVVLTASFEEKFLDVPAEALVYTMKGDQKYFPVFDNAGQLLPNFIFVTNIESKDPQQIISGNEKVVRPRLADAEFFFETDKKESLEARLASLETVVFQKQLGTIKQRVERISALAGYIATSINANSEEAARAGLLSKSDLMTNMVMEFTDLQGTMGMHYARLNGETEAVAVALAEQYKPKFSGDTVPTAPISICVALAEKLDTLVGIFGIGQAPKGAADPFALRRAAIGVLRICLENNLPLDLVDLIAKAQELHGENLTNENVAEQVLEFFMGRFRAWYQDQGVSVDVILAVLARRPTAPADFESRIKAVAHFRTLEQASALAAANKRVSNILAKVEGELPAAIDDKLLVEEAEKALAAKLAELQPQLAPLFAAANYQEALALLASLRESVDTFFEDVMVMADDEALKNNRLALLSSLREQFLHAADISLLQ</sequence>
<dbReference type="EC" id="6.1.1.14" evidence="1"/>
<dbReference type="EMBL" id="CP000931">
    <property type="protein sequence ID" value="ABZ74582.1"/>
    <property type="molecule type" value="Genomic_DNA"/>
</dbReference>
<dbReference type="RefSeq" id="WP_012275140.1">
    <property type="nucleotide sequence ID" value="NC_010334.1"/>
</dbReference>
<dbReference type="SMR" id="B0TLA9"/>
<dbReference type="STRING" id="458817.Shal_0006"/>
<dbReference type="KEGG" id="shl:Shal_0006"/>
<dbReference type="eggNOG" id="COG0751">
    <property type="taxonomic scope" value="Bacteria"/>
</dbReference>
<dbReference type="HOGENOM" id="CLU_007220_2_2_6"/>
<dbReference type="OrthoDB" id="9775440at2"/>
<dbReference type="Proteomes" id="UP000001317">
    <property type="component" value="Chromosome"/>
</dbReference>
<dbReference type="GO" id="GO:0005829">
    <property type="term" value="C:cytosol"/>
    <property type="evidence" value="ECO:0007669"/>
    <property type="project" value="TreeGrafter"/>
</dbReference>
<dbReference type="GO" id="GO:0004814">
    <property type="term" value="F:arginine-tRNA ligase activity"/>
    <property type="evidence" value="ECO:0007669"/>
    <property type="project" value="InterPro"/>
</dbReference>
<dbReference type="GO" id="GO:0005524">
    <property type="term" value="F:ATP binding"/>
    <property type="evidence" value="ECO:0007669"/>
    <property type="project" value="UniProtKB-UniRule"/>
</dbReference>
<dbReference type="GO" id="GO:0004820">
    <property type="term" value="F:glycine-tRNA ligase activity"/>
    <property type="evidence" value="ECO:0007669"/>
    <property type="project" value="UniProtKB-UniRule"/>
</dbReference>
<dbReference type="GO" id="GO:0006420">
    <property type="term" value="P:arginyl-tRNA aminoacylation"/>
    <property type="evidence" value="ECO:0007669"/>
    <property type="project" value="InterPro"/>
</dbReference>
<dbReference type="GO" id="GO:0006426">
    <property type="term" value="P:glycyl-tRNA aminoacylation"/>
    <property type="evidence" value="ECO:0007669"/>
    <property type="project" value="UniProtKB-UniRule"/>
</dbReference>
<dbReference type="Gene3D" id="1.10.730.10">
    <property type="entry name" value="Isoleucyl-tRNA Synthetase, Domain 1"/>
    <property type="match status" value="1"/>
</dbReference>
<dbReference type="HAMAP" id="MF_00255">
    <property type="entry name" value="Gly_tRNA_synth_beta"/>
    <property type="match status" value="1"/>
</dbReference>
<dbReference type="InterPro" id="IPR008909">
    <property type="entry name" value="DALR_anticod-bd"/>
</dbReference>
<dbReference type="InterPro" id="IPR015944">
    <property type="entry name" value="Gly-tRNA-synth_bsu"/>
</dbReference>
<dbReference type="InterPro" id="IPR006194">
    <property type="entry name" value="Gly-tRNA-synth_heterodimer"/>
</dbReference>
<dbReference type="NCBIfam" id="TIGR00211">
    <property type="entry name" value="glyS"/>
    <property type="match status" value="1"/>
</dbReference>
<dbReference type="PANTHER" id="PTHR30075:SF2">
    <property type="entry name" value="GLYCINE--TRNA LIGASE, CHLOROPLASTIC_MITOCHONDRIAL 2"/>
    <property type="match status" value="1"/>
</dbReference>
<dbReference type="PANTHER" id="PTHR30075">
    <property type="entry name" value="GLYCYL-TRNA SYNTHETASE"/>
    <property type="match status" value="1"/>
</dbReference>
<dbReference type="Pfam" id="PF05746">
    <property type="entry name" value="DALR_1"/>
    <property type="match status" value="1"/>
</dbReference>
<dbReference type="Pfam" id="PF02092">
    <property type="entry name" value="tRNA_synt_2f"/>
    <property type="match status" value="1"/>
</dbReference>
<dbReference type="PRINTS" id="PR01045">
    <property type="entry name" value="TRNASYNTHGB"/>
</dbReference>
<dbReference type="SMART" id="SM00836">
    <property type="entry name" value="DALR_1"/>
    <property type="match status" value="1"/>
</dbReference>
<dbReference type="SUPFAM" id="SSF109604">
    <property type="entry name" value="HD-domain/PDEase-like"/>
    <property type="match status" value="1"/>
</dbReference>
<dbReference type="PROSITE" id="PS50861">
    <property type="entry name" value="AA_TRNA_LIGASE_II_GLYAB"/>
    <property type="match status" value="1"/>
</dbReference>
<comment type="catalytic activity">
    <reaction evidence="1">
        <text>tRNA(Gly) + glycine + ATP = glycyl-tRNA(Gly) + AMP + diphosphate</text>
        <dbReference type="Rhea" id="RHEA:16013"/>
        <dbReference type="Rhea" id="RHEA-COMP:9664"/>
        <dbReference type="Rhea" id="RHEA-COMP:9683"/>
        <dbReference type="ChEBI" id="CHEBI:30616"/>
        <dbReference type="ChEBI" id="CHEBI:33019"/>
        <dbReference type="ChEBI" id="CHEBI:57305"/>
        <dbReference type="ChEBI" id="CHEBI:78442"/>
        <dbReference type="ChEBI" id="CHEBI:78522"/>
        <dbReference type="ChEBI" id="CHEBI:456215"/>
        <dbReference type="EC" id="6.1.1.14"/>
    </reaction>
</comment>
<comment type="subunit">
    <text evidence="1">Tetramer of two alpha and two beta subunits.</text>
</comment>
<comment type="subcellular location">
    <subcellularLocation>
        <location evidence="1">Cytoplasm</location>
    </subcellularLocation>
</comment>
<comment type="similarity">
    <text evidence="1">Belongs to the class-II aminoacyl-tRNA synthetase family.</text>
</comment>
<name>SYGB_SHEHH</name>
<protein>
    <recommendedName>
        <fullName evidence="1">Glycine--tRNA ligase beta subunit</fullName>
        <ecNumber evidence="1">6.1.1.14</ecNumber>
    </recommendedName>
    <alternativeName>
        <fullName evidence="1">Glycyl-tRNA synthetase beta subunit</fullName>
        <shortName evidence="1">GlyRS</shortName>
    </alternativeName>
</protein>
<accession>B0TLA9</accession>
<keyword id="KW-0030">Aminoacyl-tRNA synthetase</keyword>
<keyword id="KW-0067">ATP-binding</keyword>
<keyword id="KW-0963">Cytoplasm</keyword>
<keyword id="KW-0436">Ligase</keyword>
<keyword id="KW-0547">Nucleotide-binding</keyword>
<keyword id="KW-0648">Protein biosynthesis</keyword>
<feature type="chain" id="PRO_1000078548" description="Glycine--tRNA ligase beta subunit">
    <location>
        <begin position="1"/>
        <end position="689"/>
    </location>
</feature>
<evidence type="ECO:0000255" key="1">
    <source>
        <dbReference type="HAMAP-Rule" id="MF_00255"/>
    </source>
</evidence>
<proteinExistence type="inferred from homology"/>